<accession>Q1D802</accession>
<dbReference type="EC" id="3.4.25.2" evidence="1"/>
<dbReference type="EMBL" id="CP000113">
    <property type="protein sequence ID" value="ABF91143.1"/>
    <property type="molecule type" value="Genomic_DNA"/>
</dbReference>
<dbReference type="RefSeq" id="WP_011553068.1">
    <property type="nucleotide sequence ID" value="NC_008095.1"/>
</dbReference>
<dbReference type="SMR" id="Q1D802"/>
<dbReference type="STRING" id="246197.MXAN_3012"/>
<dbReference type="MEROPS" id="T01.006"/>
<dbReference type="EnsemblBacteria" id="ABF91143">
    <property type="protein sequence ID" value="ABF91143"/>
    <property type="gene ID" value="MXAN_3012"/>
</dbReference>
<dbReference type="GeneID" id="41360373"/>
<dbReference type="KEGG" id="mxa:MXAN_3012"/>
<dbReference type="eggNOG" id="COG5405">
    <property type="taxonomic scope" value="Bacteria"/>
</dbReference>
<dbReference type="HOGENOM" id="CLU_093872_1_0_7"/>
<dbReference type="OrthoDB" id="9804884at2"/>
<dbReference type="Proteomes" id="UP000002402">
    <property type="component" value="Chromosome"/>
</dbReference>
<dbReference type="GO" id="GO:0009376">
    <property type="term" value="C:HslUV protease complex"/>
    <property type="evidence" value="ECO:0007669"/>
    <property type="project" value="UniProtKB-UniRule"/>
</dbReference>
<dbReference type="GO" id="GO:0005839">
    <property type="term" value="C:proteasome core complex"/>
    <property type="evidence" value="ECO:0007669"/>
    <property type="project" value="InterPro"/>
</dbReference>
<dbReference type="GO" id="GO:0046872">
    <property type="term" value="F:metal ion binding"/>
    <property type="evidence" value="ECO:0007669"/>
    <property type="project" value="UniProtKB-KW"/>
</dbReference>
<dbReference type="GO" id="GO:0004298">
    <property type="term" value="F:threonine-type endopeptidase activity"/>
    <property type="evidence" value="ECO:0007669"/>
    <property type="project" value="UniProtKB-KW"/>
</dbReference>
<dbReference type="GO" id="GO:0051603">
    <property type="term" value="P:proteolysis involved in protein catabolic process"/>
    <property type="evidence" value="ECO:0007669"/>
    <property type="project" value="InterPro"/>
</dbReference>
<dbReference type="CDD" id="cd01913">
    <property type="entry name" value="protease_HslV"/>
    <property type="match status" value="1"/>
</dbReference>
<dbReference type="Gene3D" id="3.60.20.10">
    <property type="entry name" value="Glutamine Phosphoribosylpyrophosphate, subunit 1, domain 1"/>
    <property type="match status" value="1"/>
</dbReference>
<dbReference type="HAMAP" id="MF_00248">
    <property type="entry name" value="HslV"/>
    <property type="match status" value="1"/>
</dbReference>
<dbReference type="InterPro" id="IPR022281">
    <property type="entry name" value="ATP-dep_Prtase_HsIV_su"/>
</dbReference>
<dbReference type="InterPro" id="IPR029055">
    <property type="entry name" value="Ntn_hydrolases_N"/>
</dbReference>
<dbReference type="InterPro" id="IPR001353">
    <property type="entry name" value="Proteasome_sua/b"/>
</dbReference>
<dbReference type="InterPro" id="IPR023333">
    <property type="entry name" value="Proteasome_suB-type"/>
</dbReference>
<dbReference type="NCBIfam" id="TIGR03692">
    <property type="entry name" value="ATP_dep_HslV"/>
    <property type="match status" value="1"/>
</dbReference>
<dbReference type="NCBIfam" id="NF003964">
    <property type="entry name" value="PRK05456.1"/>
    <property type="match status" value="1"/>
</dbReference>
<dbReference type="PANTHER" id="PTHR32194:SF0">
    <property type="entry name" value="ATP-DEPENDENT PROTEASE SUBUNIT HSLV"/>
    <property type="match status" value="1"/>
</dbReference>
<dbReference type="PANTHER" id="PTHR32194">
    <property type="entry name" value="METALLOPROTEASE TLDD"/>
    <property type="match status" value="1"/>
</dbReference>
<dbReference type="Pfam" id="PF00227">
    <property type="entry name" value="Proteasome"/>
    <property type="match status" value="1"/>
</dbReference>
<dbReference type="PIRSF" id="PIRSF039093">
    <property type="entry name" value="HslV"/>
    <property type="match status" value="1"/>
</dbReference>
<dbReference type="SUPFAM" id="SSF56235">
    <property type="entry name" value="N-terminal nucleophile aminohydrolases (Ntn hydrolases)"/>
    <property type="match status" value="1"/>
</dbReference>
<dbReference type="PROSITE" id="PS51476">
    <property type="entry name" value="PROTEASOME_BETA_2"/>
    <property type="match status" value="1"/>
</dbReference>
<protein>
    <recommendedName>
        <fullName evidence="1">ATP-dependent protease subunit HslV</fullName>
        <ecNumber evidence="1">3.4.25.2</ecNumber>
    </recommendedName>
</protein>
<keyword id="KW-0021">Allosteric enzyme</keyword>
<keyword id="KW-0963">Cytoplasm</keyword>
<keyword id="KW-0378">Hydrolase</keyword>
<keyword id="KW-0479">Metal-binding</keyword>
<keyword id="KW-0645">Protease</keyword>
<keyword id="KW-1185">Reference proteome</keyword>
<keyword id="KW-0915">Sodium</keyword>
<keyword id="KW-0346">Stress response</keyword>
<keyword id="KW-0888">Threonine protease</keyword>
<organism>
    <name type="scientific">Myxococcus xanthus (strain DK1622)</name>
    <dbReference type="NCBI Taxonomy" id="246197"/>
    <lineage>
        <taxon>Bacteria</taxon>
        <taxon>Pseudomonadati</taxon>
        <taxon>Myxococcota</taxon>
        <taxon>Myxococcia</taxon>
        <taxon>Myxococcales</taxon>
        <taxon>Cystobacterineae</taxon>
        <taxon>Myxococcaceae</taxon>
        <taxon>Myxococcus</taxon>
    </lineage>
</organism>
<reference key="1">
    <citation type="journal article" date="2006" name="Proc. Natl. Acad. Sci. U.S.A.">
        <title>Evolution of sensory complexity recorded in a myxobacterial genome.</title>
        <authorList>
            <person name="Goldman B.S."/>
            <person name="Nierman W.C."/>
            <person name="Kaiser D."/>
            <person name="Slater S.C."/>
            <person name="Durkin A.S."/>
            <person name="Eisen J.A."/>
            <person name="Ronning C.M."/>
            <person name="Barbazuk W.B."/>
            <person name="Blanchard M."/>
            <person name="Field C."/>
            <person name="Halling C."/>
            <person name="Hinkle G."/>
            <person name="Iartchuk O."/>
            <person name="Kim H.S."/>
            <person name="Mackenzie C."/>
            <person name="Madupu R."/>
            <person name="Miller N."/>
            <person name="Shvartsbeyn A."/>
            <person name="Sullivan S.A."/>
            <person name="Vaudin M."/>
            <person name="Wiegand R."/>
            <person name="Kaplan H.B."/>
        </authorList>
    </citation>
    <scope>NUCLEOTIDE SEQUENCE [LARGE SCALE GENOMIC DNA]</scope>
    <source>
        <strain>DK1622</strain>
    </source>
</reference>
<proteinExistence type="inferred from homology"/>
<sequence>MFHGTTILCVRRDGKVAIASDGQVSLEKTVMKNTAKKVRRLGEGQVLAGFAGSTADAFTLFERFEAKLKEHQKNMARACVELGKDWRTDRFLRRLEALLIVADKEKTFILSGAGDVIEPDYGIAAVGSGGPYAFAAARALMAHTQMSARDVVHQSLTIAGEIDIYTNANISIEEL</sequence>
<name>HSLV_MYXXD</name>
<evidence type="ECO:0000255" key="1">
    <source>
        <dbReference type="HAMAP-Rule" id="MF_00248"/>
    </source>
</evidence>
<gene>
    <name evidence="1" type="primary">hslV</name>
    <name type="ordered locus">MXAN_3012</name>
</gene>
<feature type="chain" id="PRO_1000012636" description="ATP-dependent protease subunit HslV">
    <location>
        <begin position="1"/>
        <end position="175"/>
    </location>
</feature>
<feature type="active site" evidence="1">
    <location>
        <position position="5"/>
    </location>
</feature>
<feature type="binding site" evidence="1">
    <location>
        <position position="160"/>
    </location>
    <ligand>
        <name>Na(+)</name>
        <dbReference type="ChEBI" id="CHEBI:29101"/>
    </ligand>
</feature>
<feature type="binding site" evidence="1">
    <location>
        <position position="163"/>
    </location>
    <ligand>
        <name>Na(+)</name>
        <dbReference type="ChEBI" id="CHEBI:29101"/>
    </ligand>
</feature>
<feature type="binding site" evidence="1">
    <location>
        <position position="166"/>
    </location>
    <ligand>
        <name>Na(+)</name>
        <dbReference type="ChEBI" id="CHEBI:29101"/>
    </ligand>
</feature>
<comment type="function">
    <text evidence="1">Protease subunit of a proteasome-like degradation complex believed to be a general protein degrading machinery.</text>
</comment>
<comment type="catalytic activity">
    <reaction evidence="1">
        <text>ATP-dependent cleavage of peptide bonds with broad specificity.</text>
        <dbReference type="EC" id="3.4.25.2"/>
    </reaction>
</comment>
<comment type="activity regulation">
    <text evidence="1">Allosterically activated by HslU binding.</text>
</comment>
<comment type="subunit">
    <text evidence="1">A double ring-shaped homohexamer of HslV is capped on each side by a ring-shaped HslU homohexamer. The assembly of the HslU/HslV complex is dependent on binding of ATP.</text>
</comment>
<comment type="subcellular location">
    <subcellularLocation>
        <location evidence="1">Cytoplasm</location>
    </subcellularLocation>
</comment>
<comment type="similarity">
    <text evidence="1">Belongs to the peptidase T1B family. HslV subfamily.</text>
</comment>